<reference key="1">
    <citation type="journal article" date="1999" name="Nature">
        <title>Sequence and analysis of chromosome 4 of the plant Arabidopsis thaliana.</title>
        <authorList>
            <person name="Mayer K.F.X."/>
            <person name="Schueller C."/>
            <person name="Wambutt R."/>
            <person name="Murphy G."/>
            <person name="Volckaert G."/>
            <person name="Pohl T."/>
            <person name="Duesterhoeft A."/>
            <person name="Stiekema W."/>
            <person name="Entian K.-D."/>
            <person name="Terryn N."/>
            <person name="Harris B."/>
            <person name="Ansorge W."/>
            <person name="Brandt P."/>
            <person name="Grivell L.A."/>
            <person name="Rieger M."/>
            <person name="Weichselgartner M."/>
            <person name="de Simone V."/>
            <person name="Obermaier B."/>
            <person name="Mache R."/>
            <person name="Mueller M."/>
            <person name="Kreis M."/>
            <person name="Delseny M."/>
            <person name="Puigdomenech P."/>
            <person name="Watson M."/>
            <person name="Schmidtheini T."/>
            <person name="Reichert B."/>
            <person name="Portetelle D."/>
            <person name="Perez-Alonso M."/>
            <person name="Boutry M."/>
            <person name="Bancroft I."/>
            <person name="Vos P."/>
            <person name="Hoheisel J."/>
            <person name="Zimmermann W."/>
            <person name="Wedler H."/>
            <person name="Ridley P."/>
            <person name="Langham S.-A."/>
            <person name="McCullagh B."/>
            <person name="Bilham L."/>
            <person name="Robben J."/>
            <person name="van der Schueren J."/>
            <person name="Grymonprez B."/>
            <person name="Chuang Y.-J."/>
            <person name="Vandenbussche F."/>
            <person name="Braeken M."/>
            <person name="Weltjens I."/>
            <person name="Voet M."/>
            <person name="Bastiaens I."/>
            <person name="Aert R."/>
            <person name="Defoor E."/>
            <person name="Weitzenegger T."/>
            <person name="Bothe G."/>
            <person name="Ramsperger U."/>
            <person name="Hilbert H."/>
            <person name="Braun M."/>
            <person name="Holzer E."/>
            <person name="Brandt A."/>
            <person name="Peters S."/>
            <person name="van Staveren M."/>
            <person name="Dirkse W."/>
            <person name="Mooijman P."/>
            <person name="Klein Lankhorst R."/>
            <person name="Rose M."/>
            <person name="Hauf J."/>
            <person name="Koetter P."/>
            <person name="Berneiser S."/>
            <person name="Hempel S."/>
            <person name="Feldpausch M."/>
            <person name="Lamberth S."/>
            <person name="Van den Daele H."/>
            <person name="De Keyser A."/>
            <person name="Buysshaert C."/>
            <person name="Gielen J."/>
            <person name="Villarroel R."/>
            <person name="De Clercq R."/>
            <person name="van Montagu M."/>
            <person name="Rogers J."/>
            <person name="Cronin A."/>
            <person name="Quail M.A."/>
            <person name="Bray-Allen S."/>
            <person name="Clark L."/>
            <person name="Doggett J."/>
            <person name="Hall S."/>
            <person name="Kay M."/>
            <person name="Lennard N."/>
            <person name="McLay K."/>
            <person name="Mayes R."/>
            <person name="Pettett A."/>
            <person name="Rajandream M.A."/>
            <person name="Lyne M."/>
            <person name="Benes V."/>
            <person name="Rechmann S."/>
            <person name="Borkova D."/>
            <person name="Bloecker H."/>
            <person name="Scharfe M."/>
            <person name="Grimm M."/>
            <person name="Loehnert T.-H."/>
            <person name="Dose S."/>
            <person name="de Haan M."/>
            <person name="Maarse A.C."/>
            <person name="Schaefer M."/>
            <person name="Mueller-Auer S."/>
            <person name="Gabel C."/>
            <person name="Fuchs M."/>
            <person name="Fartmann B."/>
            <person name="Granderath K."/>
            <person name="Dauner D."/>
            <person name="Herzl A."/>
            <person name="Neumann S."/>
            <person name="Argiriou A."/>
            <person name="Vitale D."/>
            <person name="Liguori R."/>
            <person name="Piravandi E."/>
            <person name="Massenet O."/>
            <person name="Quigley F."/>
            <person name="Clabauld G."/>
            <person name="Muendlein A."/>
            <person name="Felber R."/>
            <person name="Schnabl S."/>
            <person name="Hiller R."/>
            <person name="Schmidt W."/>
            <person name="Lecharny A."/>
            <person name="Aubourg S."/>
            <person name="Chefdor F."/>
            <person name="Cooke R."/>
            <person name="Berger C."/>
            <person name="Monfort A."/>
            <person name="Casacuberta E."/>
            <person name="Gibbons T."/>
            <person name="Weber N."/>
            <person name="Vandenbol M."/>
            <person name="Bargues M."/>
            <person name="Terol J."/>
            <person name="Torres A."/>
            <person name="Perez-Perez A."/>
            <person name="Purnelle B."/>
            <person name="Bent E."/>
            <person name="Johnson S."/>
            <person name="Tacon D."/>
            <person name="Jesse T."/>
            <person name="Heijnen L."/>
            <person name="Schwarz S."/>
            <person name="Scholler P."/>
            <person name="Heber S."/>
            <person name="Francs P."/>
            <person name="Bielke C."/>
            <person name="Frishman D."/>
            <person name="Haase D."/>
            <person name="Lemcke K."/>
            <person name="Mewes H.-W."/>
            <person name="Stocker S."/>
            <person name="Zaccaria P."/>
            <person name="Bevan M."/>
            <person name="Wilson R.K."/>
            <person name="de la Bastide M."/>
            <person name="Habermann K."/>
            <person name="Parnell L."/>
            <person name="Dedhia N."/>
            <person name="Gnoj L."/>
            <person name="Schutz K."/>
            <person name="Huang E."/>
            <person name="Spiegel L."/>
            <person name="Sekhon M."/>
            <person name="Murray J."/>
            <person name="Sheet P."/>
            <person name="Cordes M."/>
            <person name="Abu-Threideh J."/>
            <person name="Stoneking T."/>
            <person name="Kalicki J."/>
            <person name="Graves T."/>
            <person name="Harmon G."/>
            <person name="Edwards J."/>
            <person name="Latreille P."/>
            <person name="Courtney L."/>
            <person name="Cloud J."/>
            <person name="Abbott A."/>
            <person name="Scott K."/>
            <person name="Johnson D."/>
            <person name="Minx P."/>
            <person name="Bentley D."/>
            <person name="Fulton B."/>
            <person name="Miller N."/>
            <person name="Greco T."/>
            <person name="Kemp K."/>
            <person name="Kramer J."/>
            <person name="Fulton L."/>
            <person name="Mardis E."/>
            <person name="Dante M."/>
            <person name="Pepin K."/>
            <person name="Hillier L.W."/>
            <person name="Nelson J."/>
            <person name="Spieth J."/>
            <person name="Ryan E."/>
            <person name="Andrews S."/>
            <person name="Geisel C."/>
            <person name="Layman D."/>
            <person name="Du H."/>
            <person name="Ali J."/>
            <person name="Berghoff A."/>
            <person name="Jones K."/>
            <person name="Drone K."/>
            <person name="Cotton M."/>
            <person name="Joshu C."/>
            <person name="Antonoiu B."/>
            <person name="Zidanic M."/>
            <person name="Strong C."/>
            <person name="Sun H."/>
            <person name="Lamar B."/>
            <person name="Yordan C."/>
            <person name="Ma P."/>
            <person name="Zhong J."/>
            <person name="Preston R."/>
            <person name="Vil D."/>
            <person name="Shekher M."/>
            <person name="Matero A."/>
            <person name="Shah R."/>
            <person name="Swaby I.K."/>
            <person name="O'Shaughnessy A."/>
            <person name="Rodriguez M."/>
            <person name="Hoffman J."/>
            <person name="Till S."/>
            <person name="Granat S."/>
            <person name="Shohdy N."/>
            <person name="Hasegawa A."/>
            <person name="Hameed A."/>
            <person name="Lodhi M."/>
            <person name="Johnson A."/>
            <person name="Chen E."/>
            <person name="Marra M.A."/>
            <person name="Martienssen R."/>
            <person name="McCombie W.R."/>
        </authorList>
    </citation>
    <scope>NUCLEOTIDE SEQUENCE [LARGE SCALE GENOMIC DNA]</scope>
    <source>
        <strain>cv. Columbia</strain>
    </source>
</reference>
<reference key="2">
    <citation type="journal article" date="2017" name="Plant J.">
        <title>Araport11: a complete reannotation of the Arabidopsis thaliana reference genome.</title>
        <authorList>
            <person name="Cheng C.Y."/>
            <person name="Krishnakumar V."/>
            <person name="Chan A.P."/>
            <person name="Thibaud-Nissen F."/>
            <person name="Schobel S."/>
            <person name="Town C.D."/>
        </authorList>
    </citation>
    <scope>GENOME REANNOTATION</scope>
    <source>
        <strain>cv. Columbia</strain>
    </source>
</reference>
<proteinExistence type="predicted"/>
<feature type="chain" id="PRO_0000357027" description="Uncharacterized protein At4g26485">
    <location>
        <begin position="1"/>
        <end position="209"/>
    </location>
</feature>
<sequence length="209" mass="23846">MEISEKWIRHYSSTHKILLVGEGNFSFSLCLASAFGSAMNITATSLDSEDELSIKYMDAVDNINILKRYGCDIQHEVDVHTMSFDNSLSLQRYDRIVFNFPHAGSRFFGRELSSRAIESHKELVRGFLENAKEMLEEDGEIHITHKTTYPFSDWGIKKLGKGEGLKLLKKSKFELSHYPGYITKRGSGGRRSDDYFPVGECSTYMFTQS</sequence>
<protein>
    <recommendedName>
        <fullName>Uncharacterized protein At4g26485</fullName>
    </recommendedName>
</protein>
<keyword id="KW-1185">Reference proteome</keyword>
<organism>
    <name type="scientific">Arabidopsis thaliana</name>
    <name type="common">Mouse-ear cress</name>
    <dbReference type="NCBI Taxonomy" id="3702"/>
    <lineage>
        <taxon>Eukaryota</taxon>
        <taxon>Viridiplantae</taxon>
        <taxon>Streptophyta</taxon>
        <taxon>Embryophyta</taxon>
        <taxon>Tracheophyta</taxon>
        <taxon>Spermatophyta</taxon>
        <taxon>Magnoliopsida</taxon>
        <taxon>eudicotyledons</taxon>
        <taxon>Gunneridae</taxon>
        <taxon>Pentapetalae</taxon>
        <taxon>rosids</taxon>
        <taxon>malvids</taxon>
        <taxon>Brassicales</taxon>
        <taxon>Brassicaceae</taxon>
        <taxon>Camelineae</taxon>
        <taxon>Arabidopsis</taxon>
    </lineage>
</organism>
<gene>
    <name type="ordered locus">At4g26485</name>
    <name type="ORF">M3E9.90</name>
</gene>
<evidence type="ECO:0000305" key="1"/>
<accession>P0C8L4</accession>
<accession>F4JUZ7</accession>
<accession>O65586</accession>
<dbReference type="EMBL" id="AL022223">
    <property type="protein sequence ID" value="CAA18222.1"/>
    <property type="status" value="ALT_SEQ"/>
    <property type="molecule type" value="Genomic_DNA"/>
</dbReference>
<dbReference type="EMBL" id="AL161565">
    <property type="protein sequence ID" value="CAB79503.1"/>
    <property type="status" value="ALT_SEQ"/>
    <property type="molecule type" value="Genomic_DNA"/>
</dbReference>
<dbReference type="EMBL" id="CP002687">
    <property type="protein sequence ID" value="AEE85208.2"/>
    <property type="molecule type" value="Genomic_DNA"/>
</dbReference>
<dbReference type="PIR" id="T05056">
    <property type="entry name" value="T05056"/>
</dbReference>
<dbReference type="RefSeq" id="NP_001190847.2">
    <property type="nucleotide sequence ID" value="NM_001203918.2"/>
</dbReference>
<dbReference type="FunCoup" id="P0C8L4">
    <property type="interactions" value="304"/>
</dbReference>
<dbReference type="GlyGen" id="P0C8L4">
    <property type="glycosylation" value="1 site, 1 O-linked glycan (1 site)"/>
</dbReference>
<dbReference type="PaxDb" id="3702-AT4G26485.1"/>
<dbReference type="EnsemblPlants" id="AT4G26485.1">
    <property type="protein sequence ID" value="AT4G26485.1"/>
    <property type="gene ID" value="AT4G26485"/>
</dbReference>
<dbReference type="GeneID" id="10723141"/>
<dbReference type="Gramene" id="AT4G26485.1">
    <property type="protein sequence ID" value="AT4G26485.1"/>
    <property type="gene ID" value="AT4G26485"/>
</dbReference>
<dbReference type="KEGG" id="ath:AT4G26485"/>
<dbReference type="Araport" id="AT4G26485"/>
<dbReference type="TAIR" id="AT4G26485"/>
<dbReference type="eggNOG" id="KOG4174">
    <property type="taxonomic scope" value="Eukaryota"/>
</dbReference>
<dbReference type="HOGENOM" id="CLU_035438_3_1_1"/>
<dbReference type="InParanoid" id="P0C8L4"/>
<dbReference type="OMA" id="PERRIKH"/>
<dbReference type="PhylomeDB" id="P0C8L4"/>
<dbReference type="PRO" id="PR:P0C8L4"/>
<dbReference type="Proteomes" id="UP000006548">
    <property type="component" value="Chromosome 4"/>
</dbReference>
<dbReference type="ExpressionAtlas" id="P0C8L4">
    <property type="expression patterns" value="baseline and differential"/>
</dbReference>
<dbReference type="GO" id="GO:0070042">
    <property type="term" value="F:rRNA (uridine-N3-)-methyltransferase activity"/>
    <property type="evidence" value="ECO:0007669"/>
    <property type="project" value="InterPro"/>
</dbReference>
<dbReference type="GO" id="GO:0070475">
    <property type="term" value="P:rRNA base methylation"/>
    <property type="evidence" value="ECO:0007669"/>
    <property type="project" value="InterPro"/>
</dbReference>
<dbReference type="Gene3D" id="3.40.50.150">
    <property type="entry name" value="Vaccinia Virus protein VP39"/>
    <property type="match status" value="1"/>
</dbReference>
<dbReference type="InterPro" id="IPR019446">
    <property type="entry name" value="BMT5-like"/>
</dbReference>
<dbReference type="InterPro" id="IPR029063">
    <property type="entry name" value="SAM-dependent_MTases_sf"/>
</dbReference>
<dbReference type="PANTHER" id="PTHR11538:SF101">
    <property type="entry name" value="25S RRNA (URIDINE-N(3))-METHYLTRANSFERASE BMT5-LIKE DOMAIN-CONTAINING PROTEIN"/>
    <property type="match status" value="1"/>
</dbReference>
<dbReference type="PANTHER" id="PTHR11538">
    <property type="entry name" value="PHENYLALANYL-TRNA SYNTHETASE"/>
    <property type="match status" value="1"/>
</dbReference>
<dbReference type="Pfam" id="PF10354">
    <property type="entry name" value="BMT5-like"/>
    <property type="match status" value="1"/>
</dbReference>
<dbReference type="SUPFAM" id="SSF53335">
    <property type="entry name" value="S-adenosyl-L-methionine-dependent methyltransferases"/>
    <property type="match status" value="1"/>
</dbReference>
<name>Y4648_ARATH</name>
<comment type="sequence caution" evidence="1">
    <conflict type="erroneous gene model prediction">
        <sequence resource="EMBL-CDS" id="CAA18222"/>
    </conflict>
    <text>The predicted gene At4g26480 has been split into 2 genes: At4g26480 and At4g26485.</text>
</comment>
<comment type="sequence caution" evidence="1">
    <conflict type="erroneous gene model prediction">
        <sequence resource="EMBL-CDS" id="CAB79503"/>
    </conflict>
    <text>The predicted gene At4g26480 has been split into 2 genes: At4g26480 and At4g26485.</text>
</comment>